<gene>
    <name type="ordered locus">At1g03050</name>
    <name type="ORF">F10O3.13</name>
</gene>
<evidence type="ECO:0000250" key="1"/>
<evidence type="ECO:0000255" key="2">
    <source>
        <dbReference type="PROSITE-ProRule" id="PRU00243"/>
    </source>
</evidence>
<evidence type="ECO:0000256" key="3">
    <source>
        <dbReference type="SAM" id="MobiDB-lite"/>
    </source>
</evidence>
<keyword id="KW-0168">Coated pit</keyword>
<keyword id="KW-0968">Cytoplasmic vesicle</keyword>
<keyword id="KW-0254">Endocytosis</keyword>
<keyword id="KW-0333">Golgi apparatus</keyword>
<keyword id="KW-0472">Membrane</keyword>
<keyword id="KW-1185">Reference proteome</keyword>
<organism>
    <name type="scientific">Arabidopsis thaliana</name>
    <name type="common">Mouse-ear cress</name>
    <dbReference type="NCBI Taxonomy" id="3702"/>
    <lineage>
        <taxon>Eukaryota</taxon>
        <taxon>Viridiplantae</taxon>
        <taxon>Streptophyta</taxon>
        <taxon>Embryophyta</taxon>
        <taxon>Tracheophyta</taxon>
        <taxon>Spermatophyta</taxon>
        <taxon>Magnoliopsida</taxon>
        <taxon>eudicotyledons</taxon>
        <taxon>Gunneridae</taxon>
        <taxon>Pentapetalae</taxon>
        <taxon>rosids</taxon>
        <taxon>malvids</taxon>
        <taxon>Brassicales</taxon>
        <taxon>Brassicaceae</taxon>
        <taxon>Camelineae</taxon>
        <taxon>Arabidopsis</taxon>
    </lineage>
</organism>
<name>CAP4_ARATH</name>
<reference key="1">
    <citation type="journal article" date="2000" name="Nature">
        <title>Sequence and analysis of chromosome 1 of the plant Arabidopsis thaliana.</title>
        <authorList>
            <person name="Theologis A."/>
            <person name="Ecker J.R."/>
            <person name="Palm C.J."/>
            <person name="Federspiel N.A."/>
            <person name="Kaul S."/>
            <person name="White O."/>
            <person name="Alonso J."/>
            <person name="Altafi H."/>
            <person name="Araujo R."/>
            <person name="Bowman C.L."/>
            <person name="Brooks S.Y."/>
            <person name="Buehler E."/>
            <person name="Chan A."/>
            <person name="Chao Q."/>
            <person name="Chen H."/>
            <person name="Cheuk R.F."/>
            <person name="Chin C.W."/>
            <person name="Chung M.K."/>
            <person name="Conn L."/>
            <person name="Conway A.B."/>
            <person name="Conway A.R."/>
            <person name="Creasy T.H."/>
            <person name="Dewar K."/>
            <person name="Dunn P."/>
            <person name="Etgu P."/>
            <person name="Feldblyum T.V."/>
            <person name="Feng J.-D."/>
            <person name="Fong B."/>
            <person name="Fujii C.Y."/>
            <person name="Gill J.E."/>
            <person name="Goldsmith A.D."/>
            <person name="Haas B."/>
            <person name="Hansen N.F."/>
            <person name="Hughes B."/>
            <person name="Huizar L."/>
            <person name="Hunter J.L."/>
            <person name="Jenkins J."/>
            <person name="Johnson-Hopson C."/>
            <person name="Khan S."/>
            <person name="Khaykin E."/>
            <person name="Kim C.J."/>
            <person name="Koo H.L."/>
            <person name="Kremenetskaia I."/>
            <person name="Kurtz D.B."/>
            <person name="Kwan A."/>
            <person name="Lam B."/>
            <person name="Langin-Hooper S."/>
            <person name="Lee A."/>
            <person name="Lee J.M."/>
            <person name="Lenz C.A."/>
            <person name="Li J.H."/>
            <person name="Li Y.-P."/>
            <person name="Lin X."/>
            <person name="Liu S.X."/>
            <person name="Liu Z.A."/>
            <person name="Luros J.S."/>
            <person name="Maiti R."/>
            <person name="Marziali A."/>
            <person name="Militscher J."/>
            <person name="Miranda M."/>
            <person name="Nguyen M."/>
            <person name="Nierman W.C."/>
            <person name="Osborne B.I."/>
            <person name="Pai G."/>
            <person name="Peterson J."/>
            <person name="Pham P.K."/>
            <person name="Rizzo M."/>
            <person name="Rooney T."/>
            <person name="Rowley D."/>
            <person name="Sakano H."/>
            <person name="Salzberg S.L."/>
            <person name="Schwartz J.R."/>
            <person name="Shinn P."/>
            <person name="Southwick A.M."/>
            <person name="Sun H."/>
            <person name="Tallon L.J."/>
            <person name="Tambunga G."/>
            <person name="Toriumi M.J."/>
            <person name="Town C.D."/>
            <person name="Utterback T."/>
            <person name="Van Aken S."/>
            <person name="Vaysberg M."/>
            <person name="Vysotskaia V.S."/>
            <person name="Walker M."/>
            <person name="Wu D."/>
            <person name="Yu G."/>
            <person name="Fraser C.M."/>
            <person name="Venter J.C."/>
            <person name="Davis R.W."/>
        </authorList>
    </citation>
    <scope>NUCLEOTIDE SEQUENCE [LARGE SCALE GENOMIC DNA]</scope>
    <source>
        <strain>cv. Columbia</strain>
    </source>
</reference>
<reference key="2">
    <citation type="journal article" date="2017" name="Plant J.">
        <title>Araport11: a complete reannotation of the Arabidopsis thaliana reference genome.</title>
        <authorList>
            <person name="Cheng C.Y."/>
            <person name="Krishnakumar V."/>
            <person name="Chan A.P."/>
            <person name="Thibaud-Nissen F."/>
            <person name="Schobel S."/>
            <person name="Town C.D."/>
        </authorList>
    </citation>
    <scope>GENOME REANNOTATION</scope>
    <source>
        <strain>cv. Columbia</strain>
    </source>
</reference>
<reference key="3">
    <citation type="journal article" date="2006" name="Plant Biotechnol. J.">
        <title>Simultaneous high-throughput recombinational cloning of open reading frames in closed and open configurations.</title>
        <authorList>
            <person name="Underwood B.A."/>
            <person name="Vanderhaeghen R."/>
            <person name="Whitford R."/>
            <person name="Town C.D."/>
            <person name="Hilson P."/>
        </authorList>
    </citation>
    <scope>NUCLEOTIDE SEQUENCE [LARGE SCALE MRNA]</scope>
    <source>
        <strain>cv. Columbia</strain>
    </source>
</reference>
<sequence length="599" mass="66971">MGSSKFKRAIGAVKDQTSVGLAKVNGRSASLSELDVAIVKATRHEEFPAEEKYIREILSLTSYSRSYINACVSTLSRRLNKTKCWTVALKTLILIQRLLGEGDQAYEQEIFFATRRGTRLLNMSDFRDVSRSNSWDYSAFVRTYALYLDERLDFRMQARHGKRGVYCVGGEADEEEQDQAAADLSTAIVVRSQPIAEMKTEQIFIRIQHLQQLLDRFLACRPTGNARNNRVVIVALYPIVKESFQIYYDVTEIMGILIERFMELDIPDSIKVYDIFCRVSKQFEELDQFYSWCKNMGIARSSEYPEIEKITQKKLDLMDEFIRDKSALEHTKQSKSVKSEADEDDDEARTEEVNEEQEDMNAIKALPEPPPKEEDDVKPEEEAKEEVIIEKKQEEMGDLLDLGNTNGGEAGQAGDSLALALFDGPYASGSGSESGPGWEAFKDDSADWETALVQTATNLSGQKSELGGGFDMLLLNGMYQHGAVNAAVKTSTAYGASGSASSMAFGSAGRPAATMLALPAPSTANGNAGNINSPVPMDPFAASLEVAPPAYVQMNDMEKKQRMLMEEQMMWDQYSRDGRQGHMNLRQNQNQPYSYTPQY</sequence>
<accession>Q9SA65</accession>
<accession>Q1PFZ0</accession>
<feature type="chain" id="PRO_0000187070" description="Putative clathrin assembly protein At1g03050">
    <location>
        <begin position="1"/>
        <end position="599"/>
    </location>
</feature>
<feature type="domain" description="ENTH" evidence="2">
    <location>
        <begin position="26"/>
        <end position="162"/>
    </location>
</feature>
<feature type="region of interest" description="Disordered" evidence="3">
    <location>
        <begin position="332"/>
        <end position="382"/>
    </location>
</feature>
<feature type="region of interest" description="Disordered" evidence="3">
    <location>
        <begin position="580"/>
        <end position="599"/>
    </location>
</feature>
<feature type="compositionally biased region" description="Acidic residues" evidence="3">
    <location>
        <begin position="341"/>
        <end position="359"/>
    </location>
</feature>
<feature type="compositionally biased region" description="Acidic residues" evidence="3">
    <location>
        <begin position="373"/>
        <end position="382"/>
    </location>
</feature>
<feature type="compositionally biased region" description="Polar residues" evidence="3">
    <location>
        <begin position="585"/>
        <end position="599"/>
    </location>
</feature>
<protein>
    <recommendedName>
        <fullName>Putative clathrin assembly protein At1g03050</fullName>
    </recommendedName>
</protein>
<dbReference type="EMBL" id="AC006550">
    <property type="protein sequence ID" value="AAD25804.1"/>
    <property type="molecule type" value="Genomic_DNA"/>
</dbReference>
<dbReference type="EMBL" id="CP002684">
    <property type="protein sequence ID" value="AEE27520.1"/>
    <property type="molecule type" value="Genomic_DNA"/>
</dbReference>
<dbReference type="EMBL" id="DQ446223">
    <property type="protein sequence ID" value="ABE65594.1"/>
    <property type="molecule type" value="mRNA"/>
</dbReference>
<dbReference type="PIR" id="C86161">
    <property type="entry name" value="C86161"/>
</dbReference>
<dbReference type="RefSeq" id="NP_171804.1">
    <property type="nucleotide sequence ID" value="NM_100186.3"/>
</dbReference>
<dbReference type="SMR" id="Q9SA65"/>
<dbReference type="FunCoup" id="Q9SA65">
    <property type="interactions" value="1423"/>
</dbReference>
<dbReference type="STRING" id="3702.Q9SA65"/>
<dbReference type="PaxDb" id="3702-AT1G03050.1"/>
<dbReference type="ProteomicsDB" id="240544"/>
<dbReference type="EnsemblPlants" id="AT1G03050.1">
    <property type="protein sequence ID" value="AT1G03050.1"/>
    <property type="gene ID" value="AT1G03050"/>
</dbReference>
<dbReference type="GeneID" id="839416"/>
<dbReference type="Gramene" id="AT1G03050.1">
    <property type="protein sequence ID" value="AT1G03050.1"/>
    <property type="gene ID" value="AT1G03050"/>
</dbReference>
<dbReference type="KEGG" id="ath:AT1G03050"/>
<dbReference type="Araport" id="AT1G03050"/>
<dbReference type="TAIR" id="AT1G03050">
    <property type="gene designation" value="PICALM5A"/>
</dbReference>
<dbReference type="eggNOG" id="KOG0251">
    <property type="taxonomic scope" value="Eukaryota"/>
</dbReference>
<dbReference type="HOGENOM" id="CLU_014098_3_0_1"/>
<dbReference type="InParanoid" id="Q9SA65"/>
<dbReference type="OMA" id="LEFRMQS"/>
<dbReference type="PhylomeDB" id="Q9SA65"/>
<dbReference type="PRO" id="PR:Q9SA65"/>
<dbReference type="Proteomes" id="UP000006548">
    <property type="component" value="Chromosome 1"/>
</dbReference>
<dbReference type="ExpressionAtlas" id="Q9SA65">
    <property type="expression patterns" value="baseline and differential"/>
</dbReference>
<dbReference type="GO" id="GO:0005905">
    <property type="term" value="C:clathrin-coated pit"/>
    <property type="evidence" value="ECO:0007669"/>
    <property type="project" value="UniProtKB-SubCell"/>
</dbReference>
<dbReference type="GO" id="GO:0030136">
    <property type="term" value="C:clathrin-coated vesicle"/>
    <property type="evidence" value="ECO:0007669"/>
    <property type="project" value="UniProtKB-SubCell"/>
</dbReference>
<dbReference type="GO" id="GO:0005794">
    <property type="term" value="C:Golgi apparatus"/>
    <property type="evidence" value="ECO:0007669"/>
    <property type="project" value="UniProtKB-SubCell"/>
</dbReference>
<dbReference type="GO" id="GO:0090406">
    <property type="term" value="C:pollen tube"/>
    <property type="evidence" value="ECO:0000314"/>
    <property type="project" value="TAIR"/>
</dbReference>
<dbReference type="GO" id="GO:0090404">
    <property type="term" value="C:pollen tube tip"/>
    <property type="evidence" value="ECO:0000314"/>
    <property type="project" value="TAIR"/>
</dbReference>
<dbReference type="GO" id="GO:0005545">
    <property type="term" value="F:1-phosphatidylinositol binding"/>
    <property type="evidence" value="ECO:0007669"/>
    <property type="project" value="InterPro"/>
</dbReference>
<dbReference type="GO" id="GO:0030276">
    <property type="term" value="F:clathrin binding"/>
    <property type="evidence" value="ECO:0007669"/>
    <property type="project" value="InterPro"/>
</dbReference>
<dbReference type="GO" id="GO:0048268">
    <property type="term" value="P:clathrin coat assembly"/>
    <property type="evidence" value="ECO:0007669"/>
    <property type="project" value="InterPro"/>
</dbReference>
<dbReference type="GO" id="GO:0072583">
    <property type="term" value="P:clathrin-dependent endocytosis"/>
    <property type="evidence" value="ECO:0007669"/>
    <property type="project" value="InterPro"/>
</dbReference>
<dbReference type="GO" id="GO:0009860">
    <property type="term" value="P:pollen tube growth"/>
    <property type="evidence" value="ECO:0000316"/>
    <property type="project" value="TAIR"/>
</dbReference>
<dbReference type="GO" id="GO:0072659">
    <property type="term" value="P:protein localization to plasma membrane"/>
    <property type="evidence" value="ECO:0000316"/>
    <property type="project" value="TAIR"/>
</dbReference>
<dbReference type="CDD" id="cd16987">
    <property type="entry name" value="ANTH_N_AP180_plant"/>
    <property type="match status" value="1"/>
</dbReference>
<dbReference type="FunFam" id="1.25.40.90:FF:000019">
    <property type="entry name" value="Clathrin coat assembly protein"/>
    <property type="match status" value="1"/>
</dbReference>
<dbReference type="FunFam" id="1.20.58.150:FF:000005">
    <property type="entry name" value="putative clathrin assembly protein At2g25430"/>
    <property type="match status" value="1"/>
</dbReference>
<dbReference type="Gene3D" id="1.25.40.90">
    <property type="match status" value="1"/>
</dbReference>
<dbReference type="Gene3D" id="1.20.58.150">
    <property type="entry name" value="ANTH domain"/>
    <property type="match status" value="1"/>
</dbReference>
<dbReference type="InterPro" id="IPR011417">
    <property type="entry name" value="ANTH_dom"/>
</dbReference>
<dbReference type="InterPro" id="IPR014712">
    <property type="entry name" value="ANTH_dom_sf"/>
</dbReference>
<dbReference type="InterPro" id="IPR048050">
    <property type="entry name" value="ANTH_N_plant"/>
</dbReference>
<dbReference type="InterPro" id="IPR045192">
    <property type="entry name" value="AP180-like"/>
</dbReference>
<dbReference type="InterPro" id="IPR013809">
    <property type="entry name" value="ENTH"/>
</dbReference>
<dbReference type="InterPro" id="IPR008942">
    <property type="entry name" value="ENTH_VHS"/>
</dbReference>
<dbReference type="PANTHER" id="PTHR22951">
    <property type="entry name" value="CLATHRIN ASSEMBLY PROTEIN"/>
    <property type="match status" value="1"/>
</dbReference>
<dbReference type="PANTHER" id="PTHR22951:SF12">
    <property type="entry name" value="OS05G0426100 PROTEIN"/>
    <property type="match status" value="1"/>
</dbReference>
<dbReference type="Pfam" id="PF07651">
    <property type="entry name" value="ANTH"/>
    <property type="match status" value="1"/>
</dbReference>
<dbReference type="SMART" id="SM00273">
    <property type="entry name" value="ENTH"/>
    <property type="match status" value="1"/>
</dbReference>
<dbReference type="SUPFAM" id="SSF48464">
    <property type="entry name" value="ENTH/VHS domain"/>
    <property type="match status" value="1"/>
</dbReference>
<dbReference type="SUPFAM" id="SSF89009">
    <property type="entry name" value="GAT-like domain"/>
    <property type="match status" value="1"/>
</dbReference>
<dbReference type="PROSITE" id="PS50942">
    <property type="entry name" value="ENTH"/>
    <property type="match status" value="1"/>
</dbReference>
<comment type="subcellular location">
    <subcellularLocation>
        <location evidence="1">Membrane</location>
        <location evidence="1">Clathrin-coated pit</location>
    </subcellularLocation>
    <subcellularLocation>
        <location evidence="1">Golgi apparatus</location>
    </subcellularLocation>
    <subcellularLocation>
        <location evidence="1">Cytoplasmic vesicle</location>
        <location evidence="1">Clathrin-coated vesicle</location>
    </subcellularLocation>
    <text evidence="1">Colocalized with clathrin in the Golgi area.</text>
</comment>
<proteinExistence type="evidence at transcript level"/>